<name>MPI_MOUSE</name>
<sequence length="423" mass="46575">MASPRVFPLSCVVQQYAWGKVGSKSEVACLLASSDPLAQISEDKPYAELWMGTHPRGDAKILDNRISQKTLGQWIAENPDCLGSKVKNTFNGKLPFLFKVLSVDTALSIQAHPNKELAEKLHLQAPEHYPDANHKPEMAIALTSFQGLCGFRPVEEIVTFMKKVPEFQLLIGDDATAQLKESVGGDTEAMASALRNCFSHLMKSEKKVVVEQLNLLVKRISQQVFDGNNMEDIYGKLLLQLHQQHPGDIGCFAIYFLNLLTLKPGEAMFLDANVPHAYLKGDCVECMACSDNTVRAGLTPKFIDVPTLCEMLNYTPSPSNNRLFAPAQSQDDPYLSIYDPPVPDFTVMKMEVPSSVTEYKVSTLDSASILLMVQGTVTAIIPSAHAEIPLYRGGVLFIAANESVLLKITVPKDLLIFRACCLL</sequence>
<accession>Q924M7</accession>
<evidence type="ECO:0000250" key="1">
    <source>
        <dbReference type="UniProtKB" id="P34948"/>
    </source>
</evidence>
<evidence type="ECO:0000250" key="2">
    <source>
        <dbReference type="UniProtKB" id="P34949"/>
    </source>
</evidence>
<evidence type="ECO:0000269" key="3">
    <source>
    </source>
</evidence>
<evidence type="ECO:0000303" key="4">
    <source>
    </source>
</evidence>
<evidence type="ECO:0000305" key="5"/>
<evidence type="ECO:0000312" key="6">
    <source>
        <dbReference type="MGI" id="MGI:97075"/>
    </source>
</evidence>
<organism>
    <name type="scientific">Mus musculus</name>
    <name type="common">Mouse</name>
    <dbReference type="NCBI Taxonomy" id="10090"/>
    <lineage>
        <taxon>Eukaryota</taxon>
        <taxon>Metazoa</taxon>
        <taxon>Chordata</taxon>
        <taxon>Craniata</taxon>
        <taxon>Vertebrata</taxon>
        <taxon>Euteleostomi</taxon>
        <taxon>Mammalia</taxon>
        <taxon>Eutheria</taxon>
        <taxon>Euarchontoglires</taxon>
        <taxon>Glires</taxon>
        <taxon>Rodentia</taxon>
        <taxon>Myomorpha</taxon>
        <taxon>Muroidea</taxon>
        <taxon>Muridae</taxon>
        <taxon>Murinae</taxon>
        <taxon>Mus</taxon>
        <taxon>Mus</taxon>
    </lineage>
</organism>
<dbReference type="EC" id="5.3.1.8" evidence="3"/>
<dbReference type="EMBL" id="AF244360">
    <property type="protein sequence ID" value="AAK69388.1"/>
    <property type="molecule type" value="mRNA"/>
</dbReference>
<dbReference type="EMBL" id="BC051163">
    <property type="protein sequence ID" value="AAH51163.1"/>
    <property type="molecule type" value="mRNA"/>
</dbReference>
<dbReference type="CCDS" id="CCDS40650.1"/>
<dbReference type="RefSeq" id="NP_080113.1">
    <property type="nucleotide sequence ID" value="NM_025837.2"/>
</dbReference>
<dbReference type="SMR" id="Q924M7"/>
<dbReference type="BioGRID" id="225310">
    <property type="interactions" value="1"/>
</dbReference>
<dbReference type="FunCoup" id="Q924M7">
    <property type="interactions" value="1872"/>
</dbReference>
<dbReference type="IntAct" id="Q924M7">
    <property type="interactions" value="1"/>
</dbReference>
<dbReference type="MINT" id="Q924M7"/>
<dbReference type="STRING" id="10090.ENSMUSP00000034856"/>
<dbReference type="GlyGen" id="Q924M7">
    <property type="glycosylation" value="1 site, 1 O-linked glycan (1 site)"/>
</dbReference>
<dbReference type="iPTMnet" id="Q924M7"/>
<dbReference type="PhosphoSitePlus" id="Q924M7"/>
<dbReference type="SwissPalm" id="Q924M7"/>
<dbReference type="REPRODUCTION-2DPAGE" id="Q924M7"/>
<dbReference type="jPOST" id="Q924M7"/>
<dbReference type="PaxDb" id="10090-ENSMUSP00000034856"/>
<dbReference type="ProteomicsDB" id="291487"/>
<dbReference type="Pumba" id="Q924M7"/>
<dbReference type="Antibodypedia" id="2008">
    <property type="antibodies" value="409 antibodies from 32 providers"/>
</dbReference>
<dbReference type="Ensembl" id="ENSMUST00000034856.15">
    <property type="protein sequence ID" value="ENSMUSP00000034856.9"/>
    <property type="gene ID" value="ENSMUSG00000032306.15"/>
</dbReference>
<dbReference type="GeneID" id="110119"/>
<dbReference type="KEGG" id="mmu:110119"/>
<dbReference type="UCSC" id="uc009pvd.1">
    <property type="organism name" value="mouse"/>
</dbReference>
<dbReference type="AGR" id="MGI:97075"/>
<dbReference type="CTD" id="4351"/>
<dbReference type="MGI" id="MGI:97075">
    <property type="gene designation" value="Mpi"/>
</dbReference>
<dbReference type="VEuPathDB" id="HostDB:ENSMUSG00000032306"/>
<dbReference type="eggNOG" id="KOG2757">
    <property type="taxonomic scope" value="Eukaryota"/>
</dbReference>
<dbReference type="GeneTree" id="ENSGT00390000016075"/>
<dbReference type="HOGENOM" id="CLU_026967_2_0_1"/>
<dbReference type="InParanoid" id="Q924M7"/>
<dbReference type="OMA" id="DIGLFCG"/>
<dbReference type="OrthoDB" id="6605218at2759"/>
<dbReference type="PhylomeDB" id="Q924M7"/>
<dbReference type="TreeFam" id="TF312831"/>
<dbReference type="Reactome" id="R-MMU-446205">
    <property type="pathway name" value="Synthesis of GDP-mannose"/>
</dbReference>
<dbReference type="UniPathway" id="UPA00126">
    <property type="reaction ID" value="UER00423"/>
</dbReference>
<dbReference type="BioGRID-ORCS" id="110119">
    <property type="hits" value="7 hits in 78 CRISPR screens"/>
</dbReference>
<dbReference type="ChiTaRS" id="Mpi">
    <property type="organism name" value="mouse"/>
</dbReference>
<dbReference type="PRO" id="PR:Q924M7"/>
<dbReference type="Proteomes" id="UP000000589">
    <property type="component" value="Chromosome 9"/>
</dbReference>
<dbReference type="RNAct" id="Q924M7">
    <property type="molecule type" value="protein"/>
</dbReference>
<dbReference type="Bgee" id="ENSMUSG00000032306">
    <property type="expression patterns" value="Expressed in spermatocyte and 242 other cell types or tissues"/>
</dbReference>
<dbReference type="ExpressionAtlas" id="Q924M7">
    <property type="expression patterns" value="baseline and differential"/>
</dbReference>
<dbReference type="GO" id="GO:0005829">
    <property type="term" value="C:cytosol"/>
    <property type="evidence" value="ECO:0000314"/>
    <property type="project" value="MGI"/>
</dbReference>
<dbReference type="GO" id="GO:0004476">
    <property type="term" value="F:mannose-6-phosphate isomerase activity"/>
    <property type="evidence" value="ECO:0000314"/>
    <property type="project" value="MGI"/>
</dbReference>
<dbReference type="GO" id="GO:0008270">
    <property type="term" value="F:zinc ion binding"/>
    <property type="evidence" value="ECO:0007669"/>
    <property type="project" value="InterPro"/>
</dbReference>
<dbReference type="GO" id="GO:0061729">
    <property type="term" value="P:GDP-D-mannose biosynthetic process from fructose-6-phosphate"/>
    <property type="evidence" value="ECO:0007669"/>
    <property type="project" value="Ensembl"/>
</dbReference>
<dbReference type="GO" id="GO:0009298">
    <property type="term" value="P:GDP-mannose biosynthetic process"/>
    <property type="evidence" value="ECO:0000315"/>
    <property type="project" value="MGI"/>
</dbReference>
<dbReference type="GO" id="GO:0061619">
    <property type="term" value="P:glycolytic process from mannose through fructose-6-phosphate"/>
    <property type="evidence" value="ECO:0000305"/>
    <property type="project" value="MGI"/>
</dbReference>
<dbReference type="GO" id="GO:0061611">
    <property type="term" value="P:mannose to fructose-6-phosphate catabolic process"/>
    <property type="evidence" value="ECO:0000315"/>
    <property type="project" value="MGI"/>
</dbReference>
<dbReference type="CDD" id="cd07011">
    <property type="entry name" value="cupin_PMI_type_I_N"/>
    <property type="match status" value="1"/>
</dbReference>
<dbReference type="FunFam" id="1.10.441.10:FF:000001">
    <property type="entry name" value="Mannose-6-phosphate isomerase"/>
    <property type="match status" value="1"/>
</dbReference>
<dbReference type="FunFam" id="2.60.120.10:FF:000044">
    <property type="entry name" value="Mannose-6-phosphate isomerase"/>
    <property type="match status" value="1"/>
</dbReference>
<dbReference type="FunFam" id="2.60.120.10:FF:000060">
    <property type="entry name" value="Putative mannose-6-phosphate isomerase"/>
    <property type="match status" value="1"/>
</dbReference>
<dbReference type="Gene3D" id="2.60.120.10">
    <property type="entry name" value="Jelly Rolls"/>
    <property type="match status" value="2"/>
</dbReference>
<dbReference type="Gene3D" id="1.10.441.10">
    <property type="entry name" value="Phosphomannose Isomerase, domain 2"/>
    <property type="match status" value="1"/>
</dbReference>
<dbReference type="InterPro" id="IPR001250">
    <property type="entry name" value="Man6P_Isoase-1"/>
</dbReference>
<dbReference type="InterPro" id="IPR016305">
    <property type="entry name" value="Mannose-6-P_Isomerase"/>
</dbReference>
<dbReference type="InterPro" id="IPR018050">
    <property type="entry name" value="Pmannose_isomerase-type1_CS"/>
</dbReference>
<dbReference type="InterPro" id="IPR046456">
    <property type="entry name" value="PMI_typeI_C"/>
</dbReference>
<dbReference type="InterPro" id="IPR046457">
    <property type="entry name" value="PMI_typeI_cat"/>
</dbReference>
<dbReference type="InterPro" id="IPR046458">
    <property type="entry name" value="PMI_typeI_hel"/>
</dbReference>
<dbReference type="InterPro" id="IPR014710">
    <property type="entry name" value="RmlC-like_jellyroll"/>
</dbReference>
<dbReference type="InterPro" id="IPR011051">
    <property type="entry name" value="RmlC_Cupin_sf"/>
</dbReference>
<dbReference type="NCBIfam" id="TIGR00218">
    <property type="entry name" value="manA"/>
    <property type="match status" value="1"/>
</dbReference>
<dbReference type="PANTHER" id="PTHR10309">
    <property type="entry name" value="MANNOSE-6-PHOSPHATE ISOMERASE"/>
    <property type="match status" value="1"/>
</dbReference>
<dbReference type="PANTHER" id="PTHR10309:SF0">
    <property type="entry name" value="MANNOSE-6-PHOSPHATE ISOMERASE"/>
    <property type="match status" value="1"/>
</dbReference>
<dbReference type="Pfam" id="PF01238">
    <property type="entry name" value="PMI_typeI_C"/>
    <property type="match status" value="1"/>
</dbReference>
<dbReference type="Pfam" id="PF20511">
    <property type="entry name" value="PMI_typeI_cat"/>
    <property type="match status" value="1"/>
</dbReference>
<dbReference type="Pfam" id="PF20512">
    <property type="entry name" value="PMI_typeI_hel"/>
    <property type="match status" value="1"/>
</dbReference>
<dbReference type="PIRSF" id="PIRSF001480">
    <property type="entry name" value="Mannose-6-phosphate_isomerase"/>
    <property type="match status" value="1"/>
</dbReference>
<dbReference type="PRINTS" id="PR00714">
    <property type="entry name" value="MAN6PISMRASE"/>
</dbReference>
<dbReference type="SUPFAM" id="SSF51182">
    <property type="entry name" value="RmlC-like cupins"/>
    <property type="match status" value="1"/>
</dbReference>
<dbReference type="PROSITE" id="PS00965">
    <property type="entry name" value="PMI_I_1"/>
    <property type="match status" value="1"/>
</dbReference>
<dbReference type="PROSITE" id="PS00966">
    <property type="entry name" value="PMI_I_2"/>
    <property type="match status" value="1"/>
</dbReference>
<reference key="1">
    <citation type="journal article" date="2002" name="Glycobiology">
        <title>Molecular cloning, gene organization, and expression of mouse Mpi encoding phosphomannose isomerase.</title>
        <authorList>
            <person name="Davis J.A."/>
            <person name="Wu X.H."/>
            <person name="Wang L."/>
            <person name="DeRossi C."/>
            <person name="Westphal V."/>
            <person name="Wu R."/>
            <person name="Alton G."/>
            <person name="Srikrishna G."/>
            <person name="Freeze H.H."/>
        </authorList>
    </citation>
    <scope>NUCLEOTIDE SEQUENCE [MRNA]</scope>
    <scope>FUNCTION</scope>
    <scope>CATALYTIC ACTIVITY</scope>
    <scope>SUBCELLULAR LOCATION</scope>
</reference>
<reference key="2">
    <citation type="journal article" date="2004" name="Genome Res.">
        <title>The status, quality, and expansion of the NIH full-length cDNA project: the Mammalian Gene Collection (MGC).</title>
        <authorList>
            <consortium name="The MGC Project Team"/>
        </authorList>
    </citation>
    <scope>NUCLEOTIDE SEQUENCE [LARGE SCALE MRNA]</scope>
    <source>
        <tissue>Eye</tissue>
    </source>
</reference>
<reference key="3">
    <citation type="journal article" date="2010" name="Cell">
        <title>A tissue-specific atlas of mouse protein phosphorylation and expression.</title>
        <authorList>
            <person name="Huttlin E.L."/>
            <person name="Jedrychowski M.P."/>
            <person name="Elias J.E."/>
            <person name="Goswami T."/>
            <person name="Rad R."/>
            <person name="Beausoleil S.A."/>
            <person name="Villen J."/>
            <person name="Haas W."/>
            <person name="Sowa M.E."/>
            <person name="Gygi S.P."/>
        </authorList>
    </citation>
    <scope>IDENTIFICATION BY MASS SPECTROMETRY [LARGE SCALE ANALYSIS]</scope>
    <source>
        <tissue>Brain</tissue>
        <tissue>Brown adipose tissue</tissue>
        <tissue>Heart</tissue>
        <tissue>Kidney</tissue>
        <tissue>Liver</tissue>
        <tissue>Lung</tissue>
        <tissue>Pancreas</tissue>
        <tissue>Spleen</tissue>
        <tissue>Testis</tissue>
    </source>
</reference>
<feature type="initiator methionine" description="Removed" evidence="2">
    <location>
        <position position="1"/>
    </location>
</feature>
<feature type="chain" id="PRO_0000194237" description="Mannose-6-phosphate isomerase">
    <location>
        <begin position="2"/>
        <end position="423"/>
    </location>
</feature>
<feature type="active site" evidence="1">
    <location>
        <position position="295"/>
    </location>
</feature>
<feature type="binding site" evidence="1">
    <location>
        <position position="110"/>
    </location>
    <ligand>
        <name>Zn(2+)</name>
        <dbReference type="ChEBI" id="CHEBI:29105"/>
    </ligand>
</feature>
<feature type="binding site" evidence="1">
    <location>
        <position position="112"/>
    </location>
    <ligand>
        <name>Zn(2+)</name>
        <dbReference type="ChEBI" id="CHEBI:29105"/>
    </ligand>
</feature>
<feature type="binding site" evidence="1">
    <location>
        <position position="137"/>
    </location>
    <ligand>
        <name>Zn(2+)</name>
        <dbReference type="ChEBI" id="CHEBI:29105"/>
    </ligand>
</feature>
<feature type="binding site" evidence="1">
    <location>
        <position position="276"/>
    </location>
    <ligand>
        <name>Zn(2+)</name>
        <dbReference type="ChEBI" id="CHEBI:29105"/>
    </ligand>
</feature>
<feature type="modified residue" description="N-acetylalanine" evidence="2">
    <location>
        <position position="2"/>
    </location>
</feature>
<feature type="modified residue" description="Phosphoserine" evidence="2">
    <location>
        <position position="102"/>
    </location>
</feature>
<feature type="modified residue" description="Phosphoserine" evidence="2">
    <location>
        <position position="108"/>
    </location>
</feature>
<protein>
    <recommendedName>
        <fullName>Mannose-6-phosphate isomerase</fullName>
        <ecNumber evidence="3">5.3.1.8</ecNumber>
    </recommendedName>
    <alternativeName>
        <fullName>Phosphohexomutase</fullName>
    </alternativeName>
    <alternativeName>
        <fullName evidence="4">Phosphomannose isomerase</fullName>
        <shortName evidence="4">PMI</shortName>
    </alternativeName>
</protein>
<gene>
    <name evidence="6" type="primary">Mpi</name>
    <name type="synonym">Mpi1</name>
    <name type="synonym">Pmi</name>
</gene>
<keyword id="KW-0007">Acetylation</keyword>
<keyword id="KW-0963">Cytoplasm</keyword>
<keyword id="KW-0413">Isomerase</keyword>
<keyword id="KW-0479">Metal-binding</keyword>
<keyword id="KW-0597">Phosphoprotein</keyword>
<keyword id="KW-1185">Reference proteome</keyword>
<keyword id="KW-0862">Zinc</keyword>
<proteinExistence type="evidence at protein level"/>
<comment type="function">
    <text evidence="3">Isomerase that catalyzes the interconversion of fructose-6-P and mannose-6-P and has a critical role in the supply of D-mannose derivatives required for many eukaryotic glycosylation reactions.</text>
</comment>
<comment type="catalytic activity">
    <reaction evidence="3">
        <text>D-mannose 6-phosphate = D-fructose 6-phosphate</text>
        <dbReference type="Rhea" id="RHEA:12356"/>
        <dbReference type="ChEBI" id="CHEBI:58735"/>
        <dbReference type="ChEBI" id="CHEBI:61527"/>
        <dbReference type="EC" id="5.3.1.8"/>
    </reaction>
</comment>
<comment type="cofactor">
    <cofactor evidence="1">
        <name>Zn(2+)</name>
        <dbReference type="ChEBI" id="CHEBI:29105"/>
    </cofactor>
    <text evidence="1">Binds 1 zinc ion per subunit.</text>
</comment>
<comment type="pathway">
    <text>Nucleotide-sugar biosynthesis; GDP-alpha-D-mannose biosynthesis; alpha-D-mannose 1-phosphate from D-fructose 6-phosphate: step 1/2.</text>
</comment>
<comment type="subcellular location">
    <subcellularLocation>
        <location evidence="3">Cytoplasm</location>
    </subcellularLocation>
</comment>
<comment type="tissue specificity">
    <text evidence="3">Expressed in all tissues, but more abundant in testis.</text>
</comment>
<comment type="similarity">
    <text evidence="5">Belongs to the mannose-6-phosphate isomerase type 1 family.</text>
</comment>